<gene>
    <name evidence="11" type="primary">cdpNPT</name>
</gene>
<dbReference type="EC" id="2.5.1.-" evidence="3 4 6 7 9 10"/>
<dbReference type="EC" id="3.4.11.17" evidence="5"/>
<dbReference type="EMBL" id="EF433418">
    <property type="protein sequence ID" value="ABR14712.1"/>
    <property type="molecule type" value="mRNA"/>
</dbReference>
<dbReference type="PDB" id="4E0T">
    <property type="method" value="X-ray"/>
    <property type="resolution" value="2.25 A"/>
    <property type="chains" value="A/B/C/D=29-440"/>
</dbReference>
<dbReference type="PDB" id="4E0U">
    <property type="method" value="X-ray"/>
    <property type="resolution" value="2.60 A"/>
    <property type="chains" value="A/B=29-440"/>
</dbReference>
<dbReference type="PDB" id="7XVJ">
    <property type="method" value="X-ray"/>
    <property type="resolution" value="2.40 A"/>
    <property type="chains" value="A/B/C/D=38-440"/>
</dbReference>
<dbReference type="PDB" id="7Y3V">
    <property type="method" value="X-ray"/>
    <property type="resolution" value="2.43 A"/>
    <property type="chains" value="A/B/C/D=38-440"/>
</dbReference>
<dbReference type="PDBsum" id="4E0T"/>
<dbReference type="PDBsum" id="4E0U"/>
<dbReference type="PDBsum" id="7XVJ"/>
<dbReference type="PDBsum" id="7Y3V"/>
<dbReference type="SMR" id="D1D8L6"/>
<dbReference type="MEROPS" id="M77.003"/>
<dbReference type="EvolutionaryTrace" id="D1D8L6"/>
<dbReference type="GO" id="GO:0004177">
    <property type="term" value="F:aminopeptidase activity"/>
    <property type="evidence" value="ECO:0007669"/>
    <property type="project" value="UniProtKB-KW"/>
</dbReference>
<dbReference type="GO" id="GO:0004659">
    <property type="term" value="F:prenyltransferase activity"/>
    <property type="evidence" value="ECO:0007669"/>
    <property type="project" value="UniProtKB-KW"/>
</dbReference>
<dbReference type="GO" id="GO:0009820">
    <property type="term" value="P:alkaloid metabolic process"/>
    <property type="evidence" value="ECO:0007669"/>
    <property type="project" value="InterPro"/>
</dbReference>
<dbReference type="GO" id="GO:0006508">
    <property type="term" value="P:proteolysis"/>
    <property type="evidence" value="ECO:0007669"/>
    <property type="project" value="UniProtKB-KW"/>
</dbReference>
<dbReference type="CDD" id="cd13929">
    <property type="entry name" value="PT-DMATS_CymD"/>
    <property type="match status" value="1"/>
</dbReference>
<dbReference type="InterPro" id="IPR033964">
    <property type="entry name" value="Aro_prenylTrfase"/>
</dbReference>
<dbReference type="InterPro" id="IPR017795">
    <property type="entry name" value="Aro_prenylTrfase_DMATS"/>
</dbReference>
<dbReference type="InterPro" id="IPR012148">
    <property type="entry name" value="DMATS-type_fun"/>
</dbReference>
<dbReference type="NCBIfam" id="TIGR03429">
    <property type="entry name" value="arom_pren_DMATS"/>
    <property type="match status" value="1"/>
</dbReference>
<dbReference type="PANTHER" id="PTHR40627">
    <property type="entry name" value="INDOLE PRENYLTRANSFERASE TDIB-RELATED"/>
    <property type="match status" value="1"/>
</dbReference>
<dbReference type="PANTHER" id="PTHR40627:SF3">
    <property type="entry name" value="PRENYLTRANSFERASE ASQH2-RELATED"/>
    <property type="match status" value="1"/>
</dbReference>
<dbReference type="Pfam" id="PF11991">
    <property type="entry name" value="Trp_DMAT"/>
    <property type="match status" value="1"/>
</dbReference>
<dbReference type="PIRSF" id="PIRSF000509">
    <property type="entry name" value="Trp_DMAT"/>
    <property type="match status" value="1"/>
</dbReference>
<dbReference type="SFLD" id="SFLDS00036">
    <property type="entry name" value="Aromatic_Prenyltransferase"/>
    <property type="match status" value="1"/>
</dbReference>
<dbReference type="SFLD" id="SFLDG01162">
    <property type="entry name" value="I"/>
    <property type="match status" value="1"/>
</dbReference>
<sequence>MDGEMTASPPDISACDTSAVDEQTGQSGQSQAPIPKDIAYHTLTKALLFPDIDQYQHWHHVAPMLAKMLVDGKYSIHQQYEYLCLFAQLVAPVLGPYPSPGRDVYRCTLGGNMTVELSQNFQRSGSTTRIAFEPVRYQASVGHDRFNRTSVNAFFSQLQLLVKSVNIELHHLLSEHLTLTAKDERNLNEEQLTKYLTNFQVKTQYVVALDLRKTGIVAKEYFFPGIKCAATGQTGSNACFGAIRAVDKDGHLDSLCQLIEAHFQQSKIDDAFLCCDLVDPAHTRFKVYIADPLVTLARAEEHWTLGGRLTDEDAAVGLEIIRGLWSELGIIQGPLEPSAMMEKGLLPIMLNYEMKAGQRLPKPKLYMPLTGIPETKIARIMTAFFQRHDMPEQAEVFMENLQAYYEGKNLEEATRYQAWLSFAYTKEKGPYLSIYYFWPE</sequence>
<evidence type="ECO:0000250" key="1">
    <source>
        <dbReference type="UniProtKB" id="Q4WAW7"/>
    </source>
</evidence>
<evidence type="ECO:0000256" key="2">
    <source>
        <dbReference type="SAM" id="MobiDB-lite"/>
    </source>
</evidence>
<evidence type="ECO:0000269" key="3">
    <source>
    </source>
</evidence>
<evidence type="ECO:0000269" key="4">
    <source>
    </source>
</evidence>
<evidence type="ECO:0000269" key="5">
    <source>
    </source>
</evidence>
<evidence type="ECO:0000269" key="6">
    <source>
    </source>
</evidence>
<evidence type="ECO:0000269" key="7">
    <source>
    </source>
</evidence>
<evidence type="ECO:0000269" key="8">
    <source>
    </source>
</evidence>
<evidence type="ECO:0000269" key="9">
    <source>
    </source>
</evidence>
<evidence type="ECO:0000269" key="10">
    <source>
    </source>
</evidence>
<evidence type="ECO:0000303" key="11">
    <source>
    </source>
</evidence>
<evidence type="ECO:0000303" key="12">
    <source>
    </source>
</evidence>
<evidence type="ECO:0000303" key="13">
    <source>
    </source>
</evidence>
<evidence type="ECO:0000305" key="14"/>
<evidence type="ECO:0007744" key="15">
    <source>
        <dbReference type="PDB" id="4E0T"/>
    </source>
</evidence>
<evidence type="ECO:0007744" key="16">
    <source>
        <dbReference type="PDB" id="4E0U"/>
    </source>
</evidence>
<evidence type="ECO:0007829" key="17">
    <source>
        <dbReference type="PDB" id="4E0T"/>
    </source>
</evidence>
<comment type="function">
    <text evidence="3 4 5 6 7 9 10">Prenyltransferase that catalyzes reverse prenylation at position N-1 of tryptophan-containing cyclic dipeptides (PubMed:17525915, PubMed:18383240, PubMed:19113967, PubMed:19421461, PubMed:33643664, PubMed:35767141). Accepts only dimethylallyl diphosphate (DMAPP) as the prenyl donor but shows broad substrate specificities toward its aromatic substrates (PubMed:17525915, PubMed:18383240, PubMed:19113967, PubMed:19421461, PubMed:33643664, PubMed:35767141). Also shows tryptophan aminopeptidase activity with preference for linear peptides containing a tryptophanyl moiety at the N-terminus (PubMed:18635009).</text>
</comment>
<comment type="catalytic activity">
    <reaction evidence="10">
        <text>harmol + dimethylallyl diphosphate = 6-(3-dimethylallyl)harmol + diphosphate</text>
        <dbReference type="Rhea" id="RHEA:72983"/>
        <dbReference type="ChEBI" id="CHEBI:33019"/>
        <dbReference type="ChEBI" id="CHEBI:57623"/>
        <dbReference type="ChEBI" id="CHEBI:192558"/>
        <dbReference type="ChEBI" id="CHEBI:192559"/>
    </reaction>
    <physiologicalReaction direction="left-to-right" evidence="10">
        <dbReference type="Rhea" id="RHEA:72984"/>
    </physiologicalReaction>
</comment>
<comment type="catalytic activity">
    <reaction evidence="5">
        <text>an N-terminal L-tryptophanyl-L-alpha-aminoacyl-[peptide] + H2O = an N-terminal L-alpha-aminoacyl-[peptide] + L-tryptophan</text>
        <dbReference type="Rhea" id="RHEA:72999"/>
        <dbReference type="Rhea" id="RHEA-COMP:9780"/>
        <dbReference type="Rhea" id="RHEA-COMP:18174"/>
        <dbReference type="ChEBI" id="CHEBI:15377"/>
        <dbReference type="ChEBI" id="CHEBI:57912"/>
        <dbReference type="ChEBI" id="CHEBI:78597"/>
        <dbReference type="ChEBI" id="CHEBI:192694"/>
        <dbReference type="EC" id="3.4.11.17"/>
    </reaction>
    <physiologicalReaction direction="left-to-right" evidence="5">
        <dbReference type="Rhea" id="RHEA:73000"/>
    </physiologicalReaction>
</comment>
<comment type="catalytic activity">
    <reaction evidence="7">
        <text>(R)-benzodiazepinedione + dimethylallyl diphosphate = (2S,3R,11R)-aszonalenin + diphosphate</text>
        <dbReference type="Rhea" id="RHEA:73727"/>
        <dbReference type="ChEBI" id="CHEBI:33019"/>
        <dbReference type="ChEBI" id="CHEBI:57623"/>
        <dbReference type="ChEBI" id="CHEBI:188914"/>
        <dbReference type="ChEBI" id="CHEBI:192690"/>
    </reaction>
    <physiologicalReaction direction="left-to-right" evidence="7">
        <dbReference type="Rhea" id="RHEA:73728"/>
    </physiologicalReaction>
</comment>
<comment type="catalytic activity">
    <reaction evidence="7">
        <text>(S)-benzodiazepinedione + dimethylallyl diphosphate = (2S,3R,11S)-aszonalenin + diphosphate</text>
        <dbReference type="Rhea" id="RHEA:73731"/>
        <dbReference type="ChEBI" id="CHEBI:33019"/>
        <dbReference type="ChEBI" id="CHEBI:57623"/>
        <dbReference type="ChEBI" id="CHEBI:192691"/>
        <dbReference type="ChEBI" id="CHEBI:192693"/>
    </reaction>
    <physiologicalReaction direction="left-to-right" evidence="7">
        <dbReference type="Rhea" id="RHEA:73732"/>
    </physiologicalReaction>
</comment>
<comment type="biophysicochemical properties">
    <kinetics>
        <KM evidence="11">650 uM for dimethylallyl diphosphate (DMAPP)</KM>
        <KM evidence="5">300 uM for H-L-Trp-L-Gly-OH (for aminopeptidase activity)</KM>
        <KM evidence="13">380 uM for L-tryptophan</KM>
        <KM evidence="13">128 uM for cyclo-D-Trp-L-Tyr</KM>
    </kinetics>
</comment>
<comment type="similarity">
    <text evidence="14">Belongs to the tryptophan dimethylallyltransferase family.</text>
</comment>
<feature type="chain" id="PRO_0000456714" description="Cyclic dipeptide prenyltransferase">
    <location>
        <begin position="1"/>
        <end position="440"/>
    </location>
</feature>
<feature type="region of interest" description="Disordered" evidence="2">
    <location>
        <begin position="1"/>
        <end position="33"/>
    </location>
</feature>
<feature type="compositionally biased region" description="Polar residues" evidence="2">
    <location>
        <begin position="20"/>
        <end position="32"/>
    </location>
</feature>
<feature type="binding site" evidence="8 16">
    <location>
        <position position="108"/>
    </location>
    <ligand>
        <name>substrate</name>
    </ligand>
</feature>
<feature type="binding site" evidence="8 16">
    <location>
        <position position="116"/>
    </location>
    <ligand>
        <name>substrate</name>
    </ligand>
</feature>
<feature type="binding site" evidence="1">
    <location>
        <position position="129"/>
    </location>
    <ligand>
        <name>dimethylallyl diphosphate</name>
        <dbReference type="ChEBI" id="CHEBI:57623"/>
    </ligand>
</feature>
<feature type="binding site" evidence="1">
    <location>
        <position position="219"/>
    </location>
    <ligand>
        <name>dimethylallyl diphosphate</name>
        <dbReference type="ChEBI" id="CHEBI:57623"/>
    </ligand>
</feature>
<feature type="binding site" evidence="1">
    <location>
        <position position="221"/>
    </location>
    <ligand>
        <name>dimethylallyl diphosphate</name>
        <dbReference type="ChEBI" id="CHEBI:57623"/>
    </ligand>
</feature>
<feature type="binding site" evidence="8 16">
    <location>
        <position position="223"/>
    </location>
    <ligand>
        <name>substrate</name>
    </ligand>
</feature>
<feature type="binding site" evidence="1">
    <location>
        <position position="286"/>
    </location>
    <ligand>
        <name>dimethylallyl diphosphate</name>
        <dbReference type="ChEBI" id="CHEBI:57623"/>
    </ligand>
</feature>
<feature type="binding site" evidence="1">
    <location>
        <position position="288"/>
    </location>
    <ligand>
        <name>dimethylallyl diphosphate</name>
        <dbReference type="ChEBI" id="CHEBI:57623"/>
    </ligand>
</feature>
<feature type="binding site" evidence="1">
    <location>
        <position position="366"/>
    </location>
    <ligand>
        <name>dimethylallyl diphosphate</name>
        <dbReference type="ChEBI" id="CHEBI:57623"/>
    </ligand>
</feature>
<feature type="binding site" evidence="1">
    <location>
        <position position="431"/>
    </location>
    <ligand>
        <name>dimethylallyl diphosphate</name>
        <dbReference type="ChEBI" id="CHEBI:57623"/>
    </ligand>
</feature>
<feature type="binding site" evidence="1">
    <location>
        <position position="435"/>
    </location>
    <ligand>
        <name>dimethylallyl diphosphate</name>
        <dbReference type="ChEBI" id="CHEBI:57623"/>
    </ligand>
</feature>
<feature type="mutagenesis site" description="Decreases the enzymatic activity." evidence="8">
    <original>T</original>
    <variation>A</variation>
    <location>
        <position position="108"/>
    </location>
</feature>
<feature type="mutagenesis site" description="Does not significantly affect the enzymatic activity." evidence="8">
    <original>A</original>
    <variation>G</variation>
    <location>
        <position position="131"/>
    </location>
</feature>
<feature type="mutagenesis site" description="Strongly decreases the enzymatic activity." evidence="8">
    <original>A</original>
    <variation>V</variation>
    <location>
        <position position="131"/>
    </location>
</feature>
<feature type="helix" evidence="17">
    <location>
        <begin position="38"/>
        <end position="44"/>
    </location>
</feature>
<feature type="helix" evidence="17">
    <location>
        <begin position="52"/>
        <end position="71"/>
    </location>
</feature>
<feature type="helix" evidence="17">
    <location>
        <begin position="76"/>
        <end position="89"/>
    </location>
</feature>
<feature type="helix" evidence="17">
    <location>
        <begin position="91"/>
        <end position="93"/>
    </location>
</feature>
<feature type="turn" evidence="17">
    <location>
        <begin position="110"/>
        <end position="112"/>
    </location>
</feature>
<feature type="strand" evidence="17">
    <location>
        <begin position="113"/>
        <end position="121"/>
    </location>
</feature>
<feature type="strand" evidence="17">
    <location>
        <begin position="126"/>
        <end position="132"/>
    </location>
</feature>
<feature type="helix" evidence="17">
    <location>
        <begin position="137"/>
        <end position="140"/>
    </location>
</feature>
<feature type="helix" evidence="17">
    <location>
        <begin position="150"/>
        <end position="161"/>
    </location>
</feature>
<feature type="helix" evidence="17">
    <location>
        <begin position="168"/>
        <end position="177"/>
    </location>
</feature>
<feature type="helix" evidence="17">
    <location>
        <begin position="181"/>
        <end position="184"/>
    </location>
</feature>
<feature type="helix" evidence="17">
    <location>
        <begin position="189"/>
        <end position="196"/>
    </location>
</feature>
<feature type="strand" evidence="17">
    <location>
        <begin position="197"/>
        <end position="200"/>
    </location>
</feature>
<feature type="strand" evidence="17">
    <location>
        <begin position="205"/>
        <end position="211"/>
    </location>
</feature>
<feature type="strand" evidence="17">
    <location>
        <begin position="217"/>
        <end position="222"/>
    </location>
</feature>
<feature type="helix" evidence="17">
    <location>
        <begin position="225"/>
        <end position="231"/>
    </location>
</feature>
<feature type="helix" evidence="17">
    <location>
        <begin position="235"/>
        <end position="246"/>
    </location>
</feature>
<feature type="helix" evidence="17">
    <location>
        <begin position="253"/>
        <end position="266"/>
    </location>
</feature>
<feature type="strand" evidence="17">
    <location>
        <begin position="271"/>
        <end position="278"/>
    </location>
</feature>
<feature type="helix" evidence="17">
    <location>
        <begin position="280"/>
        <end position="282"/>
    </location>
</feature>
<feature type="strand" evidence="17">
    <location>
        <begin position="285"/>
        <end position="292"/>
    </location>
</feature>
<feature type="helix" evidence="17">
    <location>
        <begin position="296"/>
        <end position="303"/>
    </location>
</feature>
<feature type="turn" evidence="17">
    <location>
        <begin position="304"/>
        <end position="308"/>
    </location>
</feature>
<feature type="helix" evidence="17">
    <location>
        <begin position="312"/>
        <end position="328"/>
    </location>
</feature>
<feature type="helix" evidence="17">
    <location>
        <begin position="337"/>
        <end position="342"/>
    </location>
</feature>
<feature type="strand" evidence="17">
    <location>
        <begin position="348"/>
        <end position="354"/>
    </location>
</feature>
<feature type="strand" evidence="17">
    <location>
        <begin position="362"/>
        <end position="368"/>
    </location>
</feature>
<feature type="helix" evidence="17">
    <location>
        <begin position="374"/>
        <end position="387"/>
    </location>
</feature>
<feature type="helix" evidence="17">
    <location>
        <begin position="391"/>
        <end position="404"/>
    </location>
</feature>
<feature type="turn" evidence="17">
    <location>
        <begin position="405"/>
        <end position="407"/>
    </location>
</feature>
<feature type="turn" evidence="17">
    <location>
        <begin position="410"/>
        <end position="412"/>
    </location>
</feature>
<feature type="strand" evidence="17">
    <location>
        <begin position="415"/>
        <end position="425"/>
    </location>
</feature>
<feature type="turn" evidence="17">
    <location>
        <begin position="426"/>
        <end position="428"/>
    </location>
</feature>
<feature type="strand" evidence="17">
    <location>
        <begin position="429"/>
        <end position="436"/>
    </location>
</feature>
<protein>
    <recommendedName>
        <fullName evidence="11">Cyclic dipeptide prenyltransferase</fullName>
        <shortName evidence="11">CdpNPT</shortName>
        <ecNumber evidence="3 4 6 7 9 10">2.5.1.-</ecNumber>
    </recommendedName>
    <alternativeName>
        <fullName evidence="12">Tryptophan aminopeptidase CdpNPT</fullName>
        <ecNumber evidence="5">3.4.11.17</ecNumber>
    </alternativeName>
</protein>
<organism>
    <name type="scientific">Aspergillus fumigatus</name>
    <name type="common">Neosartorya fumigata</name>
    <dbReference type="NCBI Taxonomy" id="746128"/>
    <lineage>
        <taxon>Eukaryota</taxon>
        <taxon>Fungi</taxon>
        <taxon>Dikarya</taxon>
        <taxon>Ascomycota</taxon>
        <taxon>Pezizomycotina</taxon>
        <taxon>Eurotiomycetes</taxon>
        <taxon>Eurotiomycetidae</taxon>
        <taxon>Eurotiales</taxon>
        <taxon>Aspergillaceae</taxon>
        <taxon>Aspergillus</taxon>
        <taxon>Aspergillus subgen. Fumigati</taxon>
    </lineage>
</organism>
<accession>D1D8L6</accession>
<proteinExistence type="evidence at protein level"/>
<name>CDNTP_ASPFM</name>
<keyword id="KW-0002">3D-structure</keyword>
<keyword id="KW-0031">Aminopeptidase</keyword>
<keyword id="KW-0378">Hydrolase</keyword>
<keyword id="KW-0637">Prenyltransferase</keyword>
<keyword id="KW-0645">Protease</keyword>
<keyword id="KW-0808">Transferase</keyword>
<reference key="1">
    <citation type="journal article" date="2007" name="ChemBioChem">
        <title>CdpNPT, an N-prenyltransferase from Aspergillus fumigatus: overproduction, purification and biochemical characterisation.</title>
        <authorList>
            <person name="Yin W.B."/>
            <person name="Ruan H.L."/>
            <person name="Westrich L."/>
            <person name="Grundmann A."/>
            <person name="Li S.M."/>
        </authorList>
    </citation>
    <scope>NUCLEOTIDE SEQUENCE [MRNA]</scope>
    <scope>FUNCTION</scope>
    <scope>CATALYTIC ACTIVITY</scope>
    <scope>BIOPHYSICOCHEMICAL PROPERTIES</scope>
    <scope>SUBSTRATE SPECIFICITY</scope>
    <source>
        <strain>B5233</strain>
    </source>
</reference>
<reference key="2">
    <citation type="journal article" date="2008" name="ChemBioChem">
        <title>Reinvestigation of a cyclic dipeptide N-prenyltransferase reveals rearrangement of N-1 prenylated indole derivatives.</title>
        <authorList>
            <person name="Ruan H.L."/>
            <person name="Yin W.B."/>
            <person name="Wu J.Z."/>
            <person name="Li S.M."/>
        </authorList>
    </citation>
    <scope>FUNCTION</scope>
    <scope>CATALYTIC ACTIVITY</scope>
</reference>
<reference key="3">
    <citation type="journal article" date="2008" name="Chem. Biol.">
        <title>Tryptophan aminopeptidase activity of several indole prenyltransferases from Aspergillus fumigatus.</title>
        <authorList>
            <person name="Kremer A."/>
            <person name="Li S.-M."/>
        </authorList>
    </citation>
    <scope>FUNCTION</scope>
    <scope>CATALYTIC ACTIVITY</scope>
    <scope>BIOPHYSICOCHEMICAL PROPERTIES</scope>
    <scope>SUBSTRATE SPECIFICITY</scope>
</reference>
<reference key="4">
    <citation type="journal article" date="2009" name="J. Nat. Prod.">
        <title>Substrate promiscuity of the cyclic dipeptide prenyltransferases from Aspergillus fumigatus.</title>
        <authorList>
            <person name="Zou H."/>
            <person name="Zheng X."/>
            <person name="Li S.M."/>
        </authorList>
    </citation>
    <scope>FUNCTION</scope>
    <scope>CATALYTIC ACTIVITY</scope>
    <scope>BIOPHYSICOCHEMICAL PROPERTIES</scope>
    <scope>SUBSTRATE SPECIFICITY</scope>
</reference>
<reference key="5">
    <citation type="journal article" date="2009" name="Org. Biomol. Chem.">
        <title>Stereospecific synthesis of aszonalenins by using two recombinant prenyltransferases.</title>
        <authorList>
            <person name="Yin W.B."/>
            <person name="Cheng J."/>
            <person name="Li S.M."/>
        </authorList>
    </citation>
    <scope>FUNCTION</scope>
    <scope>CATALYTIC ACTIVITY</scope>
</reference>
<reference key="6">
    <citation type="journal article" date="2012" name="Acta Crystallogr. F">
        <title>Expression, purification and crystallization of an indole prenyltransferase from Aspergillus fumigatus.</title>
        <authorList>
            <person name="Chen J."/>
            <person name="Morita H."/>
            <person name="Kato R."/>
            <person name="Noguchi H."/>
            <person name="Sugio S."/>
            <person name="Abe I."/>
        </authorList>
    </citation>
    <scope>CRYSTALLIZATION</scope>
</reference>
<reference key="7">
    <citation type="journal article" date="2020" name="Catalysts">
        <title>Indole C6 functionalization of tryprostatin B using prenyltransferase CdpNPT.</title>
        <authorList>
            <person name="Gardner E.D."/>
            <person name="Dimas D.A."/>
            <person name="Finneran M.C."/>
            <person name="Brown S.M."/>
            <person name="Burgett A.W."/>
            <person name="Singh S."/>
        </authorList>
    </citation>
    <scope>FUNCTION</scope>
    <scope>CATALYTIC ACTIVITY</scope>
</reference>
<reference key="8">
    <citation type="journal article" date="2022" name="J. Nat. Med.">
        <title>Enzymatic formation of a prenyl beta-carboline by a fungal indole prenyltransferase.</title>
        <authorList>
            <person name="Hamdy S.A."/>
            <person name="Kodama T."/>
            <person name="Nakashima Y."/>
            <person name="Han X."/>
            <person name="Matsui T."/>
            <person name="Morita H."/>
        </authorList>
    </citation>
    <scope>FUNCTION</scope>
    <scope>CATALYTIC ACTIVITY</scope>
</reference>
<reference evidence="15 16" key="9">
    <citation type="journal article" date="2012" name="J. Mol. Biol.">
        <title>Structure and catalytic mechanism of a cyclic dipeptide prenyltransferase with broad substrate promiscuity.</title>
        <authorList>
            <person name="Schuller J.M."/>
            <person name="Zocher G."/>
            <person name="Liebhold M."/>
            <person name="Xie X."/>
            <person name="Stahl M."/>
            <person name="Li S.M."/>
            <person name="Stehle T."/>
        </authorList>
    </citation>
    <scope>X-RAY CRYSTALLOGRAPHY (2.25 ANGSTROMS) OF 29-440</scope>
    <scope>MUTAGENESIS OF THR-108 AND ALA-131</scope>
    <scope>FUNCTION</scope>
    <scope>CATALYTIC ACTIVITY</scope>
</reference>